<feature type="chain" id="PRO_0000157270" description="Preprotein translocase subunit SecG">
    <location>
        <begin position="1"/>
        <end position="55"/>
    </location>
</feature>
<feature type="topological domain" description="Cytoplasmic" evidence="1">
    <location>
        <begin position="1"/>
        <end position="29"/>
    </location>
</feature>
<feature type="transmembrane region" description="Helical" evidence="1">
    <location>
        <begin position="30"/>
        <end position="49"/>
    </location>
</feature>
<feature type="topological domain" description="Extracellular" evidence="1">
    <location>
        <begin position="50"/>
        <end position="55"/>
    </location>
</feature>
<sequence length="55" mass="5792">MAKKSGSGLQSSAGLMRYYEADKNAIHIQPKTVLIAGALVGIAVIFLSAVNGFWP</sequence>
<reference key="1">
    <citation type="journal article" date="2002" name="J. Mol. Microbiol. Biotechnol.">
        <title>The genome of Methanosarcina mazei: evidence for lateral gene transfer between Bacteria and Archaea.</title>
        <authorList>
            <person name="Deppenmeier U."/>
            <person name="Johann A."/>
            <person name="Hartsch T."/>
            <person name="Merkl R."/>
            <person name="Schmitz R.A."/>
            <person name="Martinez-Arias R."/>
            <person name="Henne A."/>
            <person name="Wiezer A."/>
            <person name="Baeumer S."/>
            <person name="Jacobi C."/>
            <person name="Brueggemann H."/>
            <person name="Lienard T."/>
            <person name="Christmann A."/>
            <person name="Boemecke M."/>
            <person name="Steckel S."/>
            <person name="Bhattacharyya A."/>
            <person name="Lykidis A."/>
            <person name="Overbeek R."/>
            <person name="Klenk H.-P."/>
            <person name="Gunsalus R.P."/>
            <person name="Fritz H.-J."/>
            <person name="Gottschalk G."/>
        </authorList>
    </citation>
    <scope>NUCLEOTIDE SEQUENCE [LARGE SCALE GENOMIC DNA]</scope>
    <source>
        <strain>ATCC BAA-159 / DSM 3647 / Goe1 / Go1 / JCM 11833 / OCM 88</strain>
    </source>
</reference>
<gene>
    <name type="primary">secG</name>
    <name type="ordered locus">MM_1372</name>
</gene>
<keyword id="KW-1003">Cell membrane</keyword>
<keyword id="KW-0472">Membrane</keyword>
<keyword id="KW-0653">Protein transport</keyword>
<keyword id="KW-0811">Translocation</keyword>
<keyword id="KW-0812">Transmembrane</keyword>
<keyword id="KW-1133">Transmembrane helix</keyword>
<keyword id="KW-0813">Transport</keyword>
<dbReference type="EMBL" id="AE008384">
    <property type="protein sequence ID" value="AAM31068.1"/>
    <property type="molecule type" value="Genomic_DNA"/>
</dbReference>
<dbReference type="RefSeq" id="WP_011033318.1">
    <property type="nucleotide sequence ID" value="NC_003901.1"/>
</dbReference>
<dbReference type="SMR" id="Q8PX50"/>
<dbReference type="KEGG" id="mma:MM_1372"/>
<dbReference type="PATRIC" id="fig|192952.21.peg.1589"/>
<dbReference type="eggNOG" id="arCOG02957">
    <property type="taxonomic scope" value="Archaea"/>
</dbReference>
<dbReference type="HOGENOM" id="CLU_208205_1_1_2"/>
<dbReference type="Proteomes" id="UP000000595">
    <property type="component" value="Chromosome"/>
</dbReference>
<dbReference type="GO" id="GO:0005886">
    <property type="term" value="C:plasma membrane"/>
    <property type="evidence" value="ECO:0007669"/>
    <property type="project" value="UniProtKB-SubCell"/>
</dbReference>
<dbReference type="GO" id="GO:0015031">
    <property type="term" value="P:protein transport"/>
    <property type="evidence" value="ECO:0007669"/>
    <property type="project" value="UniProtKB-UniRule"/>
</dbReference>
<dbReference type="HAMAP" id="MF_00751">
    <property type="entry name" value="SecG"/>
    <property type="match status" value="1"/>
</dbReference>
<dbReference type="InterPro" id="IPR023531">
    <property type="entry name" value="Preprot_translocase_SecG"/>
</dbReference>
<dbReference type="InterPro" id="IPR016482">
    <property type="entry name" value="SecG/Sec61-beta/Sbh"/>
</dbReference>
<dbReference type="NCBIfam" id="NF002318">
    <property type="entry name" value="PRK01253.1"/>
    <property type="match status" value="1"/>
</dbReference>
<dbReference type="Pfam" id="PF03911">
    <property type="entry name" value="Sec61_beta"/>
    <property type="match status" value="1"/>
</dbReference>
<evidence type="ECO:0000250" key="1"/>
<evidence type="ECO:0000305" key="2"/>
<name>SECG_METMA</name>
<organism>
    <name type="scientific">Methanosarcina mazei (strain ATCC BAA-159 / DSM 3647 / Goe1 / Go1 / JCM 11833 / OCM 88)</name>
    <name type="common">Methanosarcina frisia</name>
    <dbReference type="NCBI Taxonomy" id="192952"/>
    <lineage>
        <taxon>Archaea</taxon>
        <taxon>Methanobacteriati</taxon>
        <taxon>Methanobacteriota</taxon>
        <taxon>Stenosarchaea group</taxon>
        <taxon>Methanomicrobia</taxon>
        <taxon>Methanosarcinales</taxon>
        <taxon>Methanosarcinaceae</taxon>
        <taxon>Methanosarcina</taxon>
    </lineage>
</organism>
<comment type="function">
    <text evidence="1">Involved in protein export. The function of the beta subunit is unknown, but it may be involved in stabilization of the trimeric complex (By similarity).</text>
</comment>
<comment type="subunit">
    <text evidence="1">Component of the protein translocase complex. Heterotrimer consisting of alpha (SecY), beta (SecG) and gamma (SecE) subunits. Can form oligomers of the heterotrimer (By similarity).</text>
</comment>
<comment type="subcellular location">
    <subcellularLocation>
        <location evidence="1">Cell membrane</location>
        <topology evidence="1">Single-pass membrane protein</topology>
    </subcellularLocation>
</comment>
<comment type="similarity">
    <text evidence="2">Belongs to the SEC61-beta family.</text>
</comment>
<protein>
    <recommendedName>
        <fullName>Preprotein translocase subunit SecG</fullName>
    </recommendedName>
    <alternativeName>
        <fullName>Protein transport protein Sec61 subunit beta homolog</fullName>
    </alternativeName>
</protein>
<proteinExistence type="inferred from homology"/>
<accession>Q8PX50</accession>